<reference key="1">
    <citation type="journal article" date="2010" name="J. Bacteriol.">
        <title>Whole genome sequences of two Xylella fastidiosa strains (M12 and M23) causing almond leaf scorch disease in California.</title>
        <authorList>
            <person name="Chen J."/>
            <person name="Xie G."/>
            <person name="Han S."/>
            <person name="Chertkov O."/>
            <person name="Sims D."/>
            <person name="Civerolo E.L."/>
        </authorList>
    </citation>
    <scope>NUCLEOTIDE SEQUENCE [LARGE SCALE GENOMIC DNA]</scope>
    <source>
        <strain>M23</strain>
    </source>
</reference>
<organism>
    <name type="scientific">Xylella fastidiosa (strain M23)</name>
    <dbReference type="NCBI Taxonomy" id="405441"/>
    <lineage>
        <taxon>Bacteria</taxon>
        <taxon>Pseudomonadati</taxon>
        <taxon>Pseudomonadota</taxon>
        <taxon>Gammaproteobacteria</taxon>
        <taxon>Lysobacterales</taxon>
        <taxon>Lysobacteraceae</taxon>
        <taxon>Xylella</taxon>
    </lineage>
</organism>
<name>KTHY_XYLF2</name>
<dbReference type="EC" id="2.7.4.9" evidence="1"/>
<dbReference type="EMBL" id="CP001011">
    <property type="protein sequence ID" value="ACB93061.1"/>
    <property type="molecule type" value="Genomic_DNA"/>
</dbReference>
<dbReference type="RefSeq" id="WP_004088726.1">
    <property type="nucleotide sequence ID" value="NC_010577.1"/>
</dbReference>
<dbReference type="SMR" id="B2I7G4"/>
<dbReference type="GeneID" id="93905396"/>
<dbReference type="KEGG" id="xfn:XfasM23_1654"/>
<dbReference type="HOGENOM" id="CLU_049131_0_2_6"/>
<dbReference type="Proteomes" id="UP000001698">
    <property type="component" value="Chromosome"/>
</dbReference>
<dbReference type="GO" id="GO:0005829">
    <property type="term" value="C:cytosol"/>
    <property type="evidence" value="ECO:0007669"/>
    <property type="project" value="TreeGrafter"/>
</dbReference>
<dbReference type="GO" id="GO:0005524">
    <property type="term" value="F:ATP binding"/>
    <property type="evidence" value="ECO:0007669"/>
    <property type="project" value="UniProtKB-UniRule"/>
</dbReference>
<dbReference type="GO" id="GO:0004798">
    <property type="term" value="F:dTMP kinase activity"/>
    <property type="evidence" value="ECO:0007669"/>
    <property type="project" value="UniProtKB-UniRule"/>
</dbReference>
<dbReference type="GO" id="GO:0006233">
    <property type="term" value="P:dTDP biosynthetic process"/>
    <property type="evidence" value="ECO:0007669"/>
    <property type="project" value="InterPro"/>
</dbReference>
<dbReference type="GO" id="GO:0006235">
    <property type="term" value="P:dTTP biosynthetic process"/>
    <property type="evidence" value="ECO:0007669"/>
    <property type="project" value="UniProtKB-UniRule"/>
</dbReference>
<dbReference type="GO" id="GO:0006227">
    <property type="term" value="P:dUDP biosynthetic process"/>
    <property type="evidence" value="ECO:0007669"/>
    <property type="project" value="TreeGrafter"/>
</dbReference>
<dbReference type="CDD" id="cd01672">
    <property type="entry name" value="TMPK"/>
    <property type="match status" value="1"/>
</dbReference>
<dbReference type="Gene3D" id="3.40.50.300">
    <property type="entry name" value="P-loop containing nucleotide triphosphate hydrolases"/>
    <property type="match status" value="1"/>
</dbReference>
<dbReference type="HAMAP" id="MF_00165">
    <property type="entry name" value="Thymidylate_kinase"/>
    <property type="match status" value="1"/>
</dbReference>
<dbReference type="InterPro" id="IPR027417">
    <property type="entry name" value="P-loop_NTPase"/>
</dbReference>
<dbReference type="InterPro" id="IPR039430">
    <property type="entry name" value="Thymidylate_kin-like_dom"/>
</dbReference>
<dbReference type="InterPro" id="IPR018094">
    <property type="entry name" value="Thymidylate_kinase"/>
</dbReference>
<dbReference type="NCBIfam" id="TIGR00041">
    <property type="entry name" value="DTMP_kinase"/>
    <property type="match status" value="1"/>
</dbReference>
<dbReference type="PANTHER" id="PTHR10344">
    <property type="entry name" value="THYMIDYLATE KINASE"/>
    <property type="match status" value="1"/>
</dbReference>
<dbReference type="PANTHER" id="PTHR10344:SF4">
    <property type="entry name" value="UMP-CMP KINASE 2, MITOCHONDRIAL"/>
    <property type="match status" value="1"/>
</dbReference>
<dbReference type="Pfam" id="PF02223">
    <property type="entry name" value="Thymidylate_kin"/>
    <property type="match status" value="1"/>
</dbReference>
<dbReference type="SUPFAM" id="SSF52540">
    <property type="entry name" value="P-loop containing nucleoside triphosphate hydrolases"/>
    <property type="match status" value="1"/>
</dbReference>
<protein>
    <recommendedName>
        <fullName evidence="1">Thymidylate kinase</fullName>
        <ecNumber evidence="1">2.7.4.9</ecNumber>
    </recommendedName>
    <alternativeName>
        <fullName evidence="1">dTMP kinase</fullName>
    </alternativeName>
</protein>
<feature type="chain" id="PRO_1000123601" description="Thymidylate kinase">
    <location>
        <begin position="1"/>
        <end position="217"/>
    </location>
</feature>
<feature type="binding site" evidence="1">
    <location>
        <begin position="16"/>
        <end position="23"/>
    </location>
    <ligand>
        <name>ATP</name>
        <dbReference type="ChEBI" id="CHEBI:30616"/>
    </ligand>
</feature>
<sequence>MHDQIIPCGMLVAIEGIDGAGKTTLARSLALKLRGVGLETVVSKEPTNGPWGTLLRQSAVTGRFSPEEEVDVLLRDRRQHVEDLIVPMIGRGAVVILDRYFPSMVAYQGAAGLPVDALLEANAFAPRPDVLLLLDVPPVIGLQRIWERGSTPNHFETTENLSRCRDIFLALELPSKRVIDATANAETVFSAALGLVMEVLRVRLGALGAVVLERLAG</sequence>
<proteinExistence type="inferred from homology"/>
<evidence type="ECO:0000255" key="1">
    <source>
        <dbReference type="HAMAP-Rule" id="MF_00165"/>
    </source>
</evidence>
<keyword id="KW-0067">ATP-binding</keyword>
<keyword id="KW-0418">Kinase</keyword>
<keyword id="KW-0545">Nucleotide biosynthesis</keyword>
<keyword id="KW-0547">Nucleotide-binding</keyword>
<keyword id="KW-0808">Transferase</keyword>
<accession>B2I7G4</accession>
<comment type="function">
    <text evidence="1">Phosphorylation of dTMP to form dTDP in both de novo and salvage pathways of dTTP synthesis.</text>
</comment>
<comment type="catalytic activity">
    <reaction evidence="1">
        <text>dTMP + ATP = dTDP + ADP</text>
        <dbReference type="Rhea" id="RHEA:13517"/>
        <dbReference type="ChEBI" id="CHEBI:30616"/>
        <dbReference type="ChEBI" id="CHEBI:58369"/>
        <dbReference type="ChEBI" id="CHEBI:63528"/>
        <dbReference type="ChEBI" id="CHEBI:456216"/>
        <dbReference type="EC" id="2.7.4.9"/>
    </reaction>
</comment>
<comment type="similarity">
    <text evidence="1">Belongs to the thymidylate kinase family.</text>
</comment>
<gene>
    <name evidence="1" type="primary">tmk</name>
    <name type="ordered locus">XfasM23_1654</name>
</gene>